<evidence type="ECO:0000250" key="1">
    <source>
        <dbReference type="UniProtKB" id="Q65195"/>
    </source>
</evidence>
<evidence type="ECO:0000305" key="2"/>
<comment type="subcellular location">
    <subcellularLocation>
        <location evidence="1">Virion</location>
    </subcellularLocation>
</comment>
<comment type="induction">
    <text evidence="2">Expressed in the late phase of the viral replicative cycle.</text>
</comment>
<comment type="similarity">
    <text evidence="2">Belongs to the asfivirus E423R family.</text>
</comment>
<gene>
    <name type="ordered locus">War-137</name>
</gene>
<dbReference type="EMBL" id="AY261366">
    <property type="status" value="NOT_ANNOTATED_CDS"/>
    <property type="molecule type" value="Genomic_DNA"/>
</dbReference>
<dbReference type="SMR" id="P0CAH2"/>
<dbReference type="Proteomes" id="UP000000858">
    <property type="component" value="Segment"/>
</dbReference>
<dbReference type="GO" id="GO:0044423">
    <property type="term" value="C:virion component"/>
    <property type="evidence" value="ECO:0007669"/>
    <property type="project" value="UniProtKB-KW"/>
</dbReference>
<sequence>MLWRNEITEFMDQLSKYSQEILKTFKQLRPSEYKQYNEFLTQVTPLLQKTPDKIPELVDHIFNYLDNVEKICELLVNASSIIISSKIREQVKHGMSFSYKADLDSLADILIQKQYVLMHLSKNIAAQYFNTCLNQGKSKLDLKAASVFYSSRPRTASSAELYRKMLYAYGSPQEINYYTEKARNKTLDVEESDSMAIIERTARHNLSLMHPLEAMGLTFGATNTDADPEDLKDKTVINLTLPQATESITYHLKSLMQLKKVSTASGLNTNILKAFDNIISTPVKKNKMASKLAPGMDVVFTSDNGKTFFTKNILSKNMLAGPKERVFAYNNLISNLNNSCFIQNHNDFLRQQDSWPFYDAHNFTNKFLMQPIFSGQTRPRLQGAMEAAHVETHLTAFLQSIQPSRPQDPSVLASPKLSALILN</sequence>
<reference key="1">
    <citation type="submission" date="2003-03" db="EMBL/GenBank/DDBJ databases">
        <title>African swine fever virus genomes.</title>
        <authorList>
            <person name="Kutish G.F."/>
            <person name="Rock D.L."/>
        </authorList>
    </citation>
    <scope>NUCLEOTIDE SEQUENCE [LARGE SCALE GENOMIC DNA]</scope>
</reference>
<feature type="chain" id="PRO_0000373689" description="Uncharacterized protein E423R">
    <location>
        <begin position="1"/>
        <end position="423"/>
    </location>
</feature>
<accession>P0CAH2</accession>
<protein>
    <recommendedName>
        <fullName>Uncharacterized protein E423R</fullName>
        <shortName>pE423R</shortName>
    </recommendedName>
</protein>
<proteinExistence type="inferred from homology"/>
<organismHost>
    <name type="scientific">Ornithodoros</name>
    <name type="common">relapsing fever ticks</name>
    <dbReference type="NCBI Taxonomy" id="6937"/>
</organismHost>
<organismHost>
    <name type="scientific">Phacochoerus aethiopicus</name>
    <name type="common">Warthog</name>
    <dbReference type="NCBI Taxonomy" id="85517"/>
</organismHost>
<organismHost>
    <name type="scientific">Phacochoerus africanus</name>
    <name type="common">Warthog</name>
    <dbReference type="NCBI Taxonomy" id="41426"/>
</organismHost>
<organismHost>
    <name type="scientific">Potamochoerus larvatus</name>
    <name type="common">Bushpig</name>
    <dbReference type="NCBI Taxonomy" id="273792"/>
</organismHost>
<organismHost>
    <name type="scientific">Sus scrofa</name>
    <name type="common">Pig</name>
    <dbReference type="NCBI Taxonomy" id="9823"/>
</organismHost>
<keyword id="KW-0946">Virion</keyword>
<organism>
    <name type="scientific">African swine fever virus (isolate Warthog/Namibia/Wart80/1980)</name>
    <name type="common">ASFV</name>
    <dbReference type="NCBI Taxonomy" id="561444"/>
    <lineage>
        <taxon>Viruses</taxon>
        <taxon>Varidnaviria</taxon>
        <taxon>Bamfordvirae</taxon>
        <taxon>Nucleocytoviricota</taxon>
        <taxon>Pokkesviricetes</taxon>
        <taxon>Asfuvirales</taxon>
        <taxon>Asfarviridae</taxon>
        <taxon>Asfivirus</taxon>
        <taxon>African swine fever virus</taxon>
    </lineage>
</organism>
<name>VF423_ASFWA</name>